<name>RS4E_THEVO</name>
<gene>
    <name type="primary">rps4e</name>
    <name type="ordered locus">TV0341</name>
    <name type="ORF">TVG0339087</name>
</gene>
<sequence length="235" mass="26110">MINKTKRLMVPRTVKIPRKTYFWGPTPLPGRHKADHSVTLLTIIRDYLRLSDKEREATRILANGLVKVDGKVVKERKFGVGFMDVIEISGESYRVVYNNQGALVLVSESKDRANMKPLQVKNKVIAPGNKIQLGFHDGRVMVTEDRSISVGDVVIASLPDMKITEIIKMQPGNKAFITGGSHVGETGTISKIEIKESSSANLVHFDEGFTTVKDHVFVIGSPRFTFTMPSGEVYP</sequence>
<proteinExistence type="inferred from homology"/>
<evidence type="ECO:0000305" key="1"/>
<reference key="1">
    <citation type="journal article" date="2000" name="Proc. Natl. Acad. Sci. U.S.A.">
        <title>Archaeal adaptation to higher temperatures revealed by genomic sequence of Thermoplasma volcanium.</title>
        <authorList>
            <person name="Kawashima T."/>
            <person name="Amano N."/>
            <person name="Koike H."/>
            <person name="Makino S."/>
            <person name="Higuchi S."/>
            <person name="Kawashima-Ohya Y."/>
            <person name="Watanabe K."/>
            <person name="Yamazaki M."/>
            <person name="Kanehori K."/>
            <person name="Kawamoto T."/>
            <person name="Nunoshiba T."/>
            <person name="Yamamoto Y."/>
            <person name="Aramaki H."/>
            <person name="Makino K."/>
            <person name="Suzuki M."/>
        </authorList>
    </citation>
    <scope>NUCLEOTIDE SEQUENCE [LARGE SCALE GENOMIC DNA]</scope>
    <source>
        <strain>ATCC 51530 / DSM 4299 / JCM 9571 / NBRC 15438 / GSS1</strain>
    </source>
</reference>
<accession>Q97BW4</accession>
<feature type="chain" id="PRO_0000130866" description="Small ribosomal subunit protein eS4">
    <location>
        <begin position="1"/>
        <end position="235"/>
    </location>
</feature>
<feature type="domain" description="S4 RNA-binding">
    <location>
        <begin position="38"/>
        <end position="99"/>
    </location>
</feature>
<comment type="similarity">
    <text evidence="1">Belongs to the eukaryotic ribosomal protein eS4 family.</text>
</comment>
<keyword id="KW-0687">Ribonucleoprotein</keyword>
<keyword id="KW-0689">Ribosomal protein</keyword>
<keyword id="KW-0694">RNA-binding</keyword>
<keyword id="KW-0699">rRNA-binding</keyword>
<dbReference type="EMBL" id="BA000011">
    <property type="protein sequence ID" value="BAB59483.1"/>
    <property type="molecule type" value="Genomic_DNA"/>
</dbReference>
<dbReference type="RefSeq" id="WP_010916595.1">
    <property type="nucleotide sequence ID" value="NC_002689.2"/>
</dbReference>
<dbReference type="SMR" id="Q97BW4"/>
<dbReference type="STRING" id="273116.gene:9381118"/>
<dbReference type="PaxDb" id="273116-14324556"/>
<dbReference type="GeneID" id="1440853"/>
<dbReference type="KEGG" id="tvo:TVG0339087"/>
<dbReference type="eggNOG" id="arCOG04093">
    <property type="taxonomic scope" value="Archaea"/>
</dbReference>
<dbReference type="HOGENOM" id="CLU_060400_0_0_2"/>
<dbReference type="OrthoDB" id="372073at2157"/>
<dbReference type="PhylomeDB" id="Q97BW4"/>
<dbReference type="Proteomes" id="UP000001017">
    <property type="component" value="Chromosome"/>
</dbReference>
<dbReference type="GO" id="GO:0022627">
    <property type="term" value="C:cytosolic small ribosomal subunit"/>
    <property type="evidence" value="ECO:0007669"/>
    <property type="project" value="TreeGrafter"/>
</dbReference>
<dbReference type="GO" id="GO:0019843">
    <property type="term" value="F:rRNA binding"/>
    <property type="evidence" value="ECO:0007669"/>
    <property type="project" value="UniProtKB-KW"/>
</dbReference>
<dbReference type="GO" id="GO:0003735">
    <property type="term" value="F:structural constituent of ribosome"/>
    <property type="evidence" value="ECO:0007669"/>
    <property type="project" value="InterPro"/>
</dbReference>
<dbReference type="GO" id="GO:0006412">
    <property type="term" value="P:translation"/>
    <property type="evidence" value="ECO:0007669"/>
    <property type="project" value="UniProtKB-UniRule"/>
</dbReference>
<dbReference type="CDD" id="cd06087">
    <property type="entry name" value="KOW_RPS4"/>
    <property type="match status" value="1"/>
</dbReference>
<dbReference type="CDD" id="cd00165">
    <property type="entry name" value="S4"/>
    <property type="match status" value="1"/>
</dbReference>
<dbReference type="Gene3D" id="2.30.30.30">
    <property type="match status" value="1"/>
</dbReference>
<dbReference type="Gene3D" id="2.40.50.740">
    <property type="match status" value="1"/>
</dbReference>
<dbReference type="Gene3D" id="3.10.290.10">
    <property type="entry name" value="RNA-binding S4 domain"/>
    <property type="match status" value="1"/>
</dbReference>
<dbReference type="HAMAP" id="MF_00485">
    <property type="entry name" value="Ribosomal_eS4"/>
    <property type="match status" value="1"/>
</dbReference>
<dbReference type="InterPro" id="IPR014722">
    <property type="entry name" value="Rib_uL2_dom2"/>
</dbReference>
<dbReference type="InterPro" id="IPR000876">
    <property type="entry name" value="Ribosomal_eS4"/>
</dbReference>
<dbReference type="InterPro" id="IPR013845">
    <property type="entry name" value="Ribosomal_eS4_central_region"/>
</dbReference>
<dbReference type="InterPro" id="IPR038237">
    <property type="entry name" value="Ribosomal_eS4_central_sf"/>
</dbReference>
<dbReference type="InterPro" id="IPR041982">
    <property type="entry name" value="Ribosomal_eS4_KOW"/>
</dbReference>
<dbReference type="InterPro" id="IPR002942">
    <property type="entry name" value="S4_RNA-bd"/>
</dbReference>
<dbReference type="InterPro" id="IPR036986">
    <property type="entry name" value="S4_RNA-bd_sf"/>
</dbReference>
<dbReference type="NCBIfam" id="NF003312">
    <property type="entry name" value="PRK04313.1"/>
    <property type="match status" value="1"/>
</dbReference>
<dbReference type="PANTHER" id="PTHR11581">
    <property type="entry name" value="30S/40S RIBOSOMAL PROTEIN S4"/>
    <property type="match status" value="1"/>
</dbReference>
<dbReference type="PANTHER" id="PTHR11581:SF0">
    <property type="entry name" value="SMALL RIBOSOMAL SUBUNIT PROTEIN ES4"/>
    <property type="match status" value="1"/>
</dbReference>
<dbReference type="Pfam" id="PF00900">
    <property type="entry name" value="Ribosomal_S4e"/>
    <property type="match status" value="1"/>
</dbReference>
<dbReference type="Pfam" id="PF01479">
    <property type="entry name" value="S4"/>
    <property type="match status" value="1"/>
</dbReference>
<dbReference type="PIRSF" id="PIRSF002116">
    <property type="entry name" value="Ribosomal_S4"/>
    <property type="match status" value="1"/>
</dbReference>
<dbReference type="SMART" id="SM00363">
    <property type="entry name" value="S4"/>
    <property type="match status" value="1"/>
</dbReference>
<dbReference type="SUPFAM" id="SSF55174">
    <property type="entry name" value="Alpha-L RNA-binding motif"/>
    <property type="match status" value="1"/>
</dbReference>
<dbReference type="PROSITE" id="PS50889">
    <property type="entry name" value="S4"/>
    <property type="match status" value="1"/>
</dbReference>
<protein>
    <recommendedName>
        <fullName evidence="1">Small ribosomal subunit protein eS4</fullName>
    </recommendedName>
    <alternativeName>
        <fullName>30S ribosomal protein S4e</fullName>
    </alternativeName>
</protein>
<organism>
    <name type="scientific">Thermoplasma volcanium (strain ATCC 51530 / DSM 4299 / JCM 9571 / NBRC 15438 / GSS1)</name>
    <dbReference type="NCBI Taxonomy" id="273116"/>
    <lineage>
        <taxon>Archaea</taxon>
        <taxon>Methanobacteriati</taxon>
        <taxon>Thermoplasmatota</taxon>
        <taxon>Thermoplasmata</taxon>
        <taxon>Thermoplasmatales</taxon>
        <taxon>Thermoplasmataceae</taxon>
        <taxon>Thermoplasma</taxon>
    </lineage>
</organism>